<keyword id="KW-0067">ATP-binding</keyword>
<keyword id="KW-0143">Chaperone</keyword>
<keyword id="KW-0963">Cytoplasm</keyword>
<keyword id="KW-0547">Nucleotide-binding</keyword>
<keyword id="KW-0346">Stress response</keyword>
<name>HSLU_BURO1</name>
<dbReference type="EMBL" id="CP000378">
    <property type="protein sequence ID" value="ABF77377.1"/>
    <property type="molecule type" value="Genomic_DNA"/>
</dbReference>
<dbReference type="SMR" id="Q1BSM8"/>
<dbReference type="HOGENOM" id="CLU_033123_0_0_4"/>
<dbReference type="GO" id="GO:0009376">
    <property type="term" value="C:HslUV protease complex"/>
    <property type="evidence" value="ECO:0007669"/>
    <property type="project" value="UniProtKB-UniRule"/>
</dbReference>
<dbReference type="GO" id="GO:0005524">
    <property type="term" value="F:ATP binding"/>
    <property type="evidence" value="ECO:0007669"/>
    <property type="project" value="UniProtKB-UniRule"/>
</dbReference>
<dbReference type="GO" id="GO:0016887">
    <property type="term" value="F:ATP hydrolysis activity"/>
    <property type="evidence" value="ECO:0007669"/>
    <property type="project" value="InterPro"/>
</dbReference>
<dbReference type="GO" id="GO:0008233">
    <property type="term" value="F:peptidase activity"/>
    <property type="evidence" value="ECO:0007669"/>
    <property type="project" value="InterPro"/>
</dbReference>
<dbReference type="GO" id="GO:0036402">
    <property type="term" value="F:proteasome-activating activity"/>
    <property type="evidence" value="ECO:0007669"/>
    <property type="project" value="UniProtKB-UniRule"/>
</dbReference>
<dbReference type="GO" id="GO:0043335">
    <property type="term" value="P:protein unfolding"/>
    <property type="evidence" value="ECO:0007669"/>
    <property type="project" value="UniProtKB-UniRule"/>
</dbReference>
<dbReference type="GO" id="GO:0051603">
    <property type="term" value="P:proteolysis involved in protein catabolic process"/>
    <property type="evidence" value="ECO:0007669"/>
    <property type="project" value="TreeGrafter"/>
</dbReference>
<dbReference type="CDD" id="cd19498">
    <property type="entry name" value="RecA-like_HslU"/>
    <property type="match status" value="1"/>
</dbReference>
<dbReference type="FunFam" id="3.40.50.300:FF:000213">
    <property type="entry name" value="ATP-dependent protease ATPase subunit HslU"/>
    <property type="match status" value="1"/>
</dbReference>
<dbReference type="FunFam" id="3.40.50.300:FF:000220">
    <property type="entry name" value="ATP-dependent protease ATPase subunit HslU"/>
    <property type="match status" value="1"/>
</dbReference>
<dbReference type="Gene3D" id="1.10.8.60">
    <property type="match status" value="1"/>
</dbReference>
<dbReference type="Gene3D" id="3.40.50.300">
    <property type="entry name" value="P-loop containing nucleotide triphosphate hydrolases"/>
    <property type="match status" value="2"/>
</dbReference>
<dbReference type="HAMAP" id="MF_00249">
    <property type="entry name" value="HslU"/>
    <property type="match status" value="1"/>
</dbReference>
<dbReference type="InterPro" id="IPR003593">
    <property type="entry name" value="AAA+_ATPase"/>
</dbReference>
<dbReference type="InterPro" id="IPR050052">
    <property type="entry name" value="ATP-dep_Clp_protease_ClpX"/>
</dbReference>
<dbReference type="InterPro" id="IPR003959">
    <property type="entry name" value="ATPase_AAA_core"/>
</dbReference>
<dbReference type="InterPro" id="IPR019489">
    <property type="entry name" value="Clp_ATPase_C"/>
</dbReference>
<dbReference type="InterPro" id="IPR004491">
    <property type="entry name" value="HslU"/>
</dbReference>
<dbReference type="InterPro" id="IPR027417">
    <property type="entry name" value="P-loop_NTPase"/>
</dbReference>
<dbReference type="NCBIfam" id="TIGR00390">
    <property type="entry name" value="hslU"/>
    <property type="match status" value="1"/>
</dbReference>
<dbReference type="NCBIfam" id="NF003544">
    <property type="entry name" value="PRK05201.1"/>
    <property type="match status" value="1"/>
</dbReference>
<dbReference type="PANTHER" id="PTHR48102">
    <property type="entry name" value="ATP-DEPENDENT CLP PROTEASE ATP-BINDING SUBUNIT CLPX-LIKE, MITOCHONDRIAL-RELATED"/>
    <property type="match status" value="1"/>
</dbReference>
<dbReference type="PANTHER" id="PTHR48102:SF3">
    <property type="entry name" value="ATP-DEPENDENT PROTEASE ATPASE SUBUNIT HSLU"/>
    <property type="match status" value="1"/>
</dbReference>
<dbReference type="Pfam" id="PF00004">
    <property type="entry name" value="AAA"/>
    <property type="match status" value="1"/>
</dbReference>
<dbReference type="Pfam" id="PF07724">
    <property type="entry name" value="AAA_2"/>
    <property type="match status" value="1"/>
</dbReference>
<dbReference type="SMART" id="SM00382">
    <property type="entry name" value="AAA"/>
    <property type="match status" value="1"/>
</dbReference>
<dbReference type="SMART" id="SM01086">
    <property type="entry name" value="ClpB_D2-small"/>
    <property type="match status" value="1"/>
</dbReference>
<dbReference type="SUPFAM" id="SSF52540">
    <property type="entry name" value="P-loop containing nucleoside triphosphate hydrolases"/>
    <property type="match status" value="1"/>
</dbReference>
<comment type="function">
    <text evidence="1">ATPase subunit of a proteasome-like degradation complex; this subunit has chaperone activity. The binding of ATP and its subsequent hydrolysis by HslU are essential for unfolding of protein substrates subsequently hydrolyzed by HslV. HslU recognizes the N-terminal part of its protein substrates and unfolds these before they are guided to HslV for hydrolysis.</text>
</comment>
<comment type="subunit">
    <text evidence="1">A double ring-shaped homohexamer of HslV is capped on each side by a ring-shaped HslU homohexamer. The assembly of the HslU/HslV complex is dependent on binding of ATP.</text>
</comment>
<comment type="subcellular location">
    <subcellularLocation>
        <location evidence="1">Cytoplasm</location>
    </subcellularLocation>
</comment>
<comment type="similarity">
    <text evidence="1">Belongs to the ClpX chaperone family. HslU subfamily.</text>
</comment>
<protein>
    <recommendedName>
        <fullName evidence="1">ATP-dependent protease ATPase subunit HslU</fullName>
    </recommendedName>
    <alternativeName>
        <fullName evidence="1">Unfoldase HslU</fullName>
    </alternativeName>
</protein>
<reference key="1">
    <citation type="submission" date="2006-05" db="EMBL/GenBank/DDBJ databases">
        <title>Complete sequence of chromosome 1 of Burkholderia cenocepacia AU 1054.</title>
        <authorList>
            <consortium name="US DOE Joint Genome Institute"/>
            <person name="Copeland A."/>
            <person name="Lucas S."/>
            <person name="Lapidus A."/>
            <person name="Barry K."/>
            <person name="Detter J.C."/>
            <person name="Glavina del Rio T."/>
            <person name="Hammon N."/>
            <person name="Israni S."/>
            <person name="Dalin E."/>
            <person name="Tice H."/>
            <person name="Pitluck S."/>
            <person name="Chain P."/>
            <person name="Malfatti S."/>
            <person name="Shin M."/>
            <person name="Vergez L."/>
            <person name="Schmutz J."/>
            <person name="Larimer F."/>
            <person name="Land M."/>
            <person name="Hauser L."/>
            <person name="Kyrpides N."/>
            <person name="Lykidis A."/>
            <person name="LiPuma J.J."/>
            <person name="Konstantinidis K."/>
            <person name="Tiedje J.M."/>
            <person name="Richardson P."/>
        </authorList>
    </citation>
    <scope>NUCLEOTIDE SEQUENCE [LARGE SCALE GENOMIC DNA]</scope>
    <source>
        <strain>AU 1054</strain>
    </source>
</reference>
<feature type="chain" id="PRO_1000012711" description="ATP-dependent protease ATPase subunit HslU">
    <location>
        <begin position="1"/>
        <end position="447"/>
    </location>
</feature>
<feature type="binding site" evidence="1">
    <location>
        <position position="18"/>
    </location>
    <ligand>
        <name>ATP</name>
        <dbReference type="ChEBI" id="CHEBI:30616"/>
    </ligand>
</feature>
<feature type="binding site" evidence="1">
    <location>
        <begin position="60"/>
        <end position="65"/>
    </location>
    <ligand>
        <name>ATP</name>
        <dbReference type="ChEBI" id="CHEBI:30616"/>
    </ligand>
</feature>
<feature type="binding site" evidence="1">
    <location>
        <position position="259"/>
    </location>
    <ligand>
        <name>ATP</name>
        <dbReference type="ChEBI" id="CHEBI:30616"/>
    </ligand>
</feature>
<feature type="binding site" evidence="1">
    <location>
        <position position="325"/>
    </location>
    <ligand>
        <name>ATP</name>
        <dbReference type="ChEBI" id="CHEBI:30616"/>
    </ligand>
</feature>
<feature type="binding site" evidence="1">
    <location>
        <position position="397"/>
    </location>
    <ligand>
        <name>ATP</name>
        <dbReference type="ChEBI" id="CHEBI:30616"/>
    </ligand>
</feature>
<gene>
    <name evidence="1" type="primary">hslU</name>
    <name type="ordered locus">Bcen_2478</name>
</gene>
<sequence>MSTMTPAEIVSELDKHIIGQAKAKKAVAVALRNRWRRQQVAEPLRQEITPKNILMIGPTGVGKTEIARRLAKLADAPFIKIEATKFTEVGYVGRDVDSIVRDLIEISVKQTREAEMRKVRSKATDQAEDRILDILLPQPRAVGFGGNAEHANDDNNATRQTFRKRLREGQLDDKEVELDLEQPSVGMDIMAPPGMEEMTEQIRSMFSNLGSGKKQRRKVKIKEALKLLTDEEAAKMLNEEEVKTKAVQNVEQNGIVFLDEIDKITSRNNEGSGGEVSRQGVQRDLLPLVEGTTVNTKYGMVKTDHILFIASGAFHLAKPSDLIPELQGRFPIRVELDSLSVEDFEAILDATDASLVKQYQALLATEDVQLEFAADGIRRLAEIAFAVNEKTENIGARRLYTVIEKLLEEVSFSAGNHAGERVTIDAKYVDRALGEVAQDEDLSRYVL</sequence>
<evidence type="ECO:0000255" key="1">
    <source>
        <dbReference type="HAMAP-Rule" id="MF_00249"/>
    </source>
</evidence>
<organism>
    <name type="scientific">Burkholderia orbicola (strain AU 1054)</name>
    <dbReference type="NCBI Taxonomy" id="331271"/>
    <lineage>
        <taxon>Bacteria</taxon>
        <taxon>Pseudomonadati</taxon>
        <taxon>Pseudomonadota</taxon>
        <taxon>Betaproteobacteria</taxon>
        <taxon>Burkholderiales</taxon>
        <taxon>Burkholderiaceae</taxon>
        <taxon>Burkholderia</taxon>
        <taxon>Burkholderia cepacia complex</taxon>
        <taxon>Burkholderia orbicola</taxon>
    </lineage>
</organism>
<proteinExistence type="inferred from homology"/>
<accession>Q1BSM8</accession>